<keyword id="KW-0998">Cell outer membrane</keyword>
<keyword id="KW-0133">Cell shape</keyword>
<keyword id="KW-1015">Disulfide bond</keyword>
<keyword id="KW-0449">Lipoprotein</keyword>
<keyword id="KW-0472">Membrane</keyword>
<keyword id="KW-0564">Palmitate</keyword>
<keyword id="KW-0732">Signal</keyword>
<evidence type="ECO:0000250" key="1"/>
<evidence type="ECO:0000255" key="2">
    <source>
        <dbReference type="PROSITE-ProRule" id="PRU00303"/>
    </source>
</evidence>
<evidence type="ECO:0000305" key="3"/>
<comment type="function">
    <text evidence="1">In elementary bodies (EBs, the infectious stage, which is able to survive outside the host cell) provides the structural integrity of the outer envelope through disulfide cross-links with the large cysteine-rich periplasmic protein and the major outer membrane porin. It has been described in publications as the Sarkosyl-insoluble COMC (Chlamydia outer membrane complex), and serves as the functional equivalent of peptidoglycan (By similarity).</text>
</comment>
<comment type="subunit">
    <text evidence="1">Part of a disulfide cross-linked outer membrane complex (COMC) composed of the major outer membrane porin (MOMP), the small cysteine-rich protein (OmcA) and the large cysteine-rich periplasmic protein (OmcB).</text>
</comment>
<comment type="subcellular location">
    <subcellularLocation>
        <location evidence="3">Cell outer membrane</location>
        <topology evidence="2">Lipid-anchor</topology>
    </subcellularLocation>
    <text>The protein moiety probably penetrates into the periplasm.</text>
</comment>
<proteinExistence type="inferred from homology"/>
<organism>
    <name type="scientific">Chlamydia trachomatis serovar B (strain Jali20/OT)</name>
    <dbReference type="NCBI Taxonomy" id="580049"/>
    <lineage>
        <taxon>Bacteria</taxon>
        <taxon>Pseudomonadati</taxon>
        <taxon>Chlamydiota</taxon>
        <taxon>Chlamydiia</taxon>
        <taxon>Chlamydiales</taxon>
        <taxon>Chlamydiaceae</taxon>
        <taxon>Chlamydia/Chlamydophila group</taxon>
        <taxon>Chlamydia</taxon>
    </lineage>
</organism>
<feature type="signal peptide" evidence="2">
    <location>
        <begin position="1"/>
        <end position="18"/>
    </location>
</feature>
<feature type="chain" id="PRO_0000389551" description="Small cysteine-rich outer membrane protein OmcA">
    <location>
        <begin position="19"/>
        <end position="88"/>
    </location>
</feature>
<feature type="lipid moiety-binding region" description="N-palmitoyl cysteine" evidence="3">
    <location>
        <position position="19"/>
    </location>
</feature>
<feature type="lipid moiety-binding region" description="S-diacylglycerol cysteine" evidence="3">
    <location>
        <position position="19"/>
    </location>
</feature>
<sequence>MKKTALLAALCSVVSLSSCCRIVDCCFEDPCAPIQCSPCESKKKDVDGGCNSCNGYVPACKPCGGDTHQDAKHGPQARGIPVDGKCRQ</sequence>
<protein>
    <recommendedName>
        <fullName>Small cysteine-rich outer membrane protein OmcA</fullName>
        <shortName>Small-CRP</shortName>
    </recommendedName>
    <alternativeName>
        <fullName>9 kDa cysteine-rich lipoprotein</fullName>
        <shortName>9kDa-CRP</shortName>
    </alternativeName>
</protein>
<name>OMCA_CHLTJ</name>
<gene>
    <name type="primary">omcA</name>
    <name type="ordered locus">JALI_4451</name>
</gene>
<accession>C4PRC2</accession>
<accession>P21355</accession>
<accession>Q57433</accession>
<reference key="1">
    <citation type="journal article" date="1989" name="FEMS Microbiol. Lett.">
        <title>Chlamydia trachomatis 60 kDa cysteine rich outer membrane protein: sequence homology between trachoma and LGV biovars.</title>
        <authorList>
            <person name="Watson M.W."/>
            <person name="Lambden P.R."/>
            <person name="Ward M.E."/>
            <person name="Clarke I.N."/>
        </authorList>
    </citation>
    <scope>NUCLEOTIDE SEQUENCE [GENOMIC DNA]</scope>
</reference>
<reference key="2">
    <citation type="journal article" date="2009" name="BMC Genomics">
        <title>Co-evolution of genomes and plasmids within Chlamydia trachomatis and the emergence in Sweden of a new variant strain.</title>
        <authorList>
            <person name="Seth-Smith H.M.B."/>
            <person name="Harris S.R."/>
            <person name="Persson K."/>
            <person name="Marsh P."/>
            <person name="Barron A."/>
            <person name="Bignell A."/>
            <person name="Bjartling C."/>
            <person name="Clark L."/>
            <person name="Cutcliffe L.T."/>
            <person name="Lambden P.R."/>
            <person name="Lennard N."/>
            <person name="Lockey S.J."/>
            <person name="Quail M.A."/>
            <person name="Salim O."/>
            <person name="Skilton R.J."/>
            <person name="Wang Y."/>
            <person name="Holland M.J."/>
            <person name="Parkhill J."/>
            <person name="Thomson N.R."/>
            <person name="Clarke I.N."/>
        </authorList>
    </citation>
    <scope>NUCLEOTIDE SEQUENCE [LARGE SCALE GENOMIC DNA]</scope>
    <source>
        <strain>Jali20/OT</strain>
    </source>
</reference>
<dbReference type="EMBL" id="X53510">
    <property type="protein sequence ID" value="CAA37587.1"/>
    <property type="molecule type" value="Genomic_DNA"/>
</dbReference>
<dbReference type="EMBL" id="FM872308">
    <property type="protein sequence ID" value="CAX10899.1"/>
    <property type="molecule type" value="Genomic_DNA"/>
</dbReference>
<dbReference type="RefSeq" id="WP_009871799.1">
    <property type="nucleotide sequence ID" value="NC_012686.1"/>
</dbReference>
<dbReference type="KEGG" id="ctj:JALI_4451"/>
<dbReference type="HOGENOM" id="CLU_2463467_0_0_0"/>
<dbReference type="GO" id="GO:0009279">
    <property type="term" value="C:cell outer membrane"/>
    <property type="evidence" value="ECO:0007669"/>
    <property type="project" value="UniProtKB-SubCell"/>
</dbReference>
<dbReference type="GO" id="GO:0005201">
    <property type="term" value="F:extracellular matrix structural constituent"/>
    <property type="evidence" value="ECO:0007669"/>
    <property type="project" value="InterPro"/>
</dbReference>
<dbReference type="GO" id="GO:0008360">
    <property type="term" value="P:regulation of cell shape"/>
    <property type="evidence" value="ECO:0007669"/>
    <property type="project" value="UniProtKB-KW"/>
</dbReference>
<dbReference type="InterPro" id="IPR003517">
    <property type="entry name" value="Cys-rich_OMP3_Chlamydia"/>
</dbReference>
<dbReference type="Pfam" id="PF03503">
    <property type="entry name" value="Chlam_OMP3"/>
    <property type="match status" value="1"/>
</dbReference>
<dbReference type="PRINTS" id="PR01335">
    <property type="entry name" value="CHLAMIDIAOM3"/>
</dbReference>
<dbReference type="PROSITE" id="PS51257">
    <property type="entry name" value="PROKAR_LIPOPROTEIN"/>
    <property type="match status" value="1"/>
</dbReference>